<comment type="function">
    <text evidence="1">Involved in mRNA degradation. Catalyzes the phosphorolysis of single-stranded polyribonucleotides processively in the 3'- to 5'-direction.</text>
</comment>
<comment type="catalytic activity">
    <reaction evidence="1">
        <text>RNA(n+1) + phosphate = RNA(n) + a ribonucleoside 5'-diphosphate</text>
        <dbReference type="Rhea" id="RHEA:22096"/>
        <dbReference type="Rhea" id="RHEA-COMP:14527"/>
        <dbReference type="Rhea" id="RHEA-COMP:17342"/>
        <dbReference type="ChEBI" id="CHEBI:43474"/>
        <dbReference type="ChEBI" id="CHEBI:57930"/>
        <dbReference type="ChEBI" id="CHEBI:140395"/>
        <dbReference type="EC" id="2.7.7.8"/>
    </reaction>
</comment>
<comment type="cofactor">
    <cofactor evidence="1">
        <name>Mg(2+)</name>
        <dbReference type="ChEBI" id="CHEBI:18420"/>
    </cofactor>
</comment>
<comment type="subcellular location">
    <subcellularLocation>
        <location evidence="1">Cytoplasm</location>
    </subcellularLocation>
</comment>
<comment type="similarity">
    <text evidence="1">Belongs to the polyribonucleotide nucleotidyltransferase family.</text>
</comment>
<gene>
    <name evidence="1" type="primary">pnp</name>
    <name type="ordered locus">Mmcs_2100</name>
</gene>
<dbReference type="EC" id="2.7.7.8" evidence="1"/>
<dbReference type="EMBL" id="CP000384">
    <property type="protein sequence ID" value="ABG08208.1"/>
    <property type="molecule type" value="Genomic_DNA"/>
</dbReference>
<dbReference type="SMR" id="Q1BA76"/>
<dbReference type="KEGG" id="mmc:Mmcs_2100"/>
<dbReference type="HOGENOM" id="CLU_004217_2_2_11"/>
<dbReference type="BioCyc" id="MSP164756:G1G6O-2146-MONOMER"/>
<dbReference type="GO" id="GO:0005829">
    <property type="term" value="C:cytosol"/>
    <property type="evidence" value="ECO:0007669"/>
    <property type="project" value="TreeGrafter"/>
</dbReference>
<dbReference type="GO" id="GO:0000175">
    <property type="term" value="F:3'-5'-RNA exonuclease activity"/>
    <property type="evidence" value="ECO:0007669"/>
    <property type="project" value="TreeGrafter"/>
</dbReference>
<dbReference type="GO" id="GO:0000287">
    <property type="term" value="F:magnesium ion binding"/>
    <property type="evidence" value="ECO:0007669"/>
    <property type="project" value="UniProtKB-UniRule"/>
</dbReference>
<dbReference type="GO" id="GO:0004654">
    <property type="term" value="F:polyribonucleotide nucleotidyltransferase activity"/>
    <property type="evidence" value="ECO:0007669"/>
    <property type="project" value="UniProtKB-UniRule"/>
</dbReference>
<dbReference type="GO" id="GO:0003723">
    <property type="term" value="F:RNA binding"/>
    <property type="evidence" value="ECO:0007669"/>
    <property type="project" value="UniProtKB-UniRule"/>
</dbReference>
<dbReference type="GO" id="GO:0006402">
    <property type="term" value="P:mRNA catabolic process"/>
    <property type="evidence" value="ECO:0007669"/>
    <property type="project" value="UniProtKB-UniRule"/>
</dbReference>
<dbReference type="GO" id="GO:0006396">
    <property type="term" value="P:RNA processing"/>
    <property type="evidence" value="ECO:0007669"/>
    <property type="project" value="InterPro"/>
</dbReference>
<dbReference type="CDD" id="cd02393">
    <property type="entry name" value="KH-I_PNPase"/>
    <property type="match status" value="1"/>
</dbReference>
<dbReference type="CDD" id="cd11364">
    <property type="entry name" value="RNase_PH_PNPase_2"/>
    <property type="match status" value="1"/>
</dbReference>
<dbReference type="CDD" id="cd04472">
    <property type="entry name" value="S1_PNPase"/>
    <property type="match status" value="1"/>
</dbReference>
<dbReference type="FunFam" id="2.40.50.140:FF:000069">
    <property type="entry name" value="Polyribonucleotide nucleotidyltransferase"/>
    <property type="match status" value="1"/>
</dbReference>
<dbReference type="FunFam" id="3.30.1370.10:FF:000001">
    <property type="entry name" value="Polyribonucleotide nucleotidyltransferase"/>
    <property type="match status" value="1"/>
</dbReference>
<dbReference type="FunFam" id="3.30.230.70:FF:000001">
    <property type="entry name" value="Polyribonucleotide nucleotidyltransferase"/>
    <property type="match status" value="1"/>
</dbReference>
<dbReference type="FunFam" id="3.30.230.70:FF:000002">
    <property type="entry name" value="Polyribonucleotide nucleotidyltransferase"/>
    <property type="match status" value="1"/>
</dbReference>
<dbReference type="Gene3D" id="3.30.230.70">
    <property type="entry name" value="GHMP Kinase, N-terminal domain"/>
    <property type="match status" value="2"/>
</dbReference>
<dbReference type="Gene3D" id="3.30.1370.10">
    <property type="entry name" value="K Homology domain, type 1"/>
    <property type="match status" value="1"/>
</dbReference>
<dbReference type="Gene3D" id="2.40.50.140">
    <property type="entry name" value="Nucleic acid-binding proteins"/>
    <property type="match status" value="1"/>
</dbReference>
<dbReference type="HAMAP" id="MF_01595">
    <property type="entry name" value="PNPase"/>
    <property type="match status" value="1"/>
</dbReference>
<dbReference type="InterPro" id="IPR001247">
    <property type="entry name" value="ExoRNase_PH_dom1"/>
</dbReference>
<dbReference type="InterPro" id="IPR015847">
    <property type="entry name" value="ExoRNase_PH_dom2"/>
</dbReference>
<dbReference type="InterPro" id="IPR036345">
    <property type="entry name" value="ExoRNase_PH_dom2_sf"/>
</dbReference>
<dbReference type="InterPro" id="IPR014069">
    <property type="entry name" value="GPSI/PNP"/>
</dbReference>
<dbReference type="InterPro" id="IPR004087">
    <property type="entry name" value="KH_dom"/>
</dbReference>
<dbReference type="InterPro" id="IPR004088">
    <property type="entry name" value="KH_dom_type_1"/>
</dbReference>
<dbReference type="InterPro" id="IPR036612">
    <property type="entry name" value="KH_dom_type_1_sf"/>
</dbReference>
<dbReference type="InterPro" id="IPR012340">
    <property type="entry name" value="NA-bd_OB-fold"/>
</dbReference>
<dbReference type="InterPro" id="IPR012162">
    <property type="entry name" value="PNPase"/>
</dbReference>
<dbReference type="InterPro" id="IPR027408">
    <property type="entry name" value="PNPase/RNase_PH_dom_sf"/>
</dbReference>
<dbReference type="InterPro" id="IPR015848">
    <property type="entry name" value="PNPase_PH_RNA-bd_bac/org-type"/>
</dbReference>
<dbReference type="InterPro" id="IPR036456">
    <property type="entry name" value="PNPase_PH_RNA-bd_sf"/>
</dbReference>
<dbReference type="InterPro" id="IPR020568">
    <property type="entry name" value="Ribosomal_Su5_D2-typ_SF"/>
</dbReference>
<dbReference type="InterPro" id="IPR003029">
    <property type="entry name" value="S1_domain"/>
</dbReference>
<dbReference type="NCBIfam" id="TIGR03591">
    <property type="entry name" value="polynuc_phos"/>
    <property type="match status" value="1"/>
</dbReference>
<dbReference type="NCBIfam" id="TIGR02696">
    <property type="entry name" value="pppGpp_PNP"/>
    <property type="match status" value="1"/>
</dbReference>
<dbReference type="NCBIfam" id="NF008805">
    <property type="entry name" value="PRK11824.1"/>
    <property type="match status" value="1"/>
</dbReference>
<dbReference type="PANTHER" id="PTHR11252">
    <property type="entry name" value="POLYRIBONUCLEOTIDE NUCLEOTIDYLTRANSFERASE"/>
    <property type="match status" value="1"/>
</dbReference>
<dbReference type="PANTHER" id="PTHR11252:SF0">
    <property type="entry name" value="POLYRIBONUCLEOTIDE NUCLEOTIDYLTRANSFERASE 1, MITOCHONDRIAL"/>
    <property type="match status" value="1"/>
</dbReference>
<dbReference type="Pfam" id="PF00013">
    <property type="entry name" value="KH_1"/>
    <property type="match status" value="1"/>
</dbReference>
<dbReference type="Pfam" id="PF03726">
    <property type="entry name" value="PNPase"/>
    <property type="match status" value="1"/>
</dbReference>
<dbReference type="Pfam" id="PF01138">
    <property type="entry name" value="RNase_PH"/>
    <property type="match status" value="2"/>
</dbReference>
<dbReference type="Pfam" id="PF03725">
    <property type="entry name" value="RNase_PH_C"/>
    <property type="match status" value="1"/>
</dbReference>
<dbReference type="Pfam" id="PF00575">
    <property type="entry name" value="S1"/>
    <property type="match status" value="1"/>
</dbReference>
<dbReference type="PIRSF" id="PIRSF005499">
    <property type="entry name" value="PNPase"/>
    <property type="match status" value="1"/>
</dbReference>
<dbReference type="SMART" id="SM00322">
    <property type="entry name" value="KH"/>
    <property type="match status" value="1"/>
</dbReference>
<dbReference type="SMART" id="SM00316">
    <property type="entry name" value="S1"/>
    <property type="match status" value="1"/>
</dbReference>
<dbReference type="SUPFAM" id="SSF54791">
    <property type="entry name" value="Eukaryotic type KH-domain (KH-domain type I)"/>
    <property type="match status" value="1"/>
</dbReference>
<dbReference type="SUPFAM" id="SSF50249">
    <property type="entry name" value="Nucleic acid-binding proteins"/>
    <property type="match status" value="1"/>
</dbReference>
<dbReference type="SUPFAM" id="SSF46915">
    <property type="entry name" value="Polynucleotide phosphorylase/guanosine pentaphosphate synthase (PNPase/GPSI), domain 3"/>
    <property type="match status" value="1"/>
</dbReference>
<dbReference type="SUPFAM" id="SSF55666">
    <property type="entry name" value="Ribonuclease PH domain 2-like"/>
    <property type="match status" value="2"/>
</dbReference>
<dbReference type="SUPFAM" id="SSF54211">
    <property type="entry name" value="Ribosomal protein S5 domain 2-like"/>
    <property type="match status" value="2"/>
</dbReference>
<dbReference type="PROSITE" id="PS50084">
    <property type="entry name" value="KH_TYPE_1"/>
    <property type="match status" value="1"/>
</dbReference>
<dbReference type="PROSITE" id="PS50126">
    <property type="entry name" value="S1"/>
    <property type="match status" value="1"/>
</dbReference>
<evidence type="ECO:0000255" key="1">
    <source>
        <dbReference type="HAMAP-Rule" id="MF_01595"/>
    </source>
</evidence>
<evidence type="ECO:0000256" key="2">
    <source>
        <dbReference type="SAM" id="MobiDB-lite"/>
    </source>
</evidence>
<feature type="chain" id="PRO_0000329723" description="Polyribonucleotide nucleotidyltransferase">
    <location>
        <begin position="1"/>
        <end position="759"/>
    </location>
</feature>
<feature type="domain" description="KH" evidence="1">
    <location>
        <begin position="588"/>
        <end position="647"/>
    </location>
</feature>
<feature type="domain" description="S1 motif" evidence="1">
    <location>
        <begin position="659"/>
        <end position="728"/>
    </location>
</feature>
<feature type="region of interest" description="Disordered" evidence="2">
    <location>
        <begin position="734"/>
        <end position="759"/>
    </location>
</feature>
<feature type="compositionally biased region" description="Low complexity" evidence="2">
    <location>
        <begin position="741"/>
        <end position="759"/>
    </location>
</feature>
<feature type="binding site" evidence="1">
    <location>
        <position position="522"/>
    </location>
    <ligand>
        <name>Mg(2+)</name>
        <dbReference type="ChEBI" id="CHEBI:18420"/>
    </ligand>
</feature>
<feature type="binding site" evidence="1">
    <location>
        <position position="528"/>
    </location>
    <ligand>
        <name>Mg(2+)</name>
        <dbReference type="ChEBI" id="CHEBI:18420"/>
    </ligand>
</feature>
<accession>Q1BA76</accession>
<name>PNP_MYCSS</name>
<organism>
    <name type="scientific">Mycobacterium sp. (strain MCS)</name>
    <dbReference type="NCBI Taxonomy" id="164756"/>
    <lineage>
        <taxon>Bacteria</taxon>
        <taxon>Bacillati</taxon>
        <taxon>Actinomycetota</taxon>
        <taxon>Actinomycetes</taxon>
        <taxon>Mycobacteriales</taxon>
        <taxon>Mycobacteriaceae</taxon>
        <taxon>Mycobacterium</taxon>
    </lineage>
</organism>
<proteinExistence type="inferred from homology"/>
<keyword id="KW-0963">Cytoplasm</keyword>
<keyword id="KW-0460">Magnesium</keyword>
<keyword id="KW-0479">Metal-binding</keyword>
<keyword id="KW-0548">Nucleotidyltransferase</keyword>
<keyword id="KW-0694">RNA-binding</keyword>
<keyword id="KW-0808">Transferase</keyword>
<protein>
    <recommendedName>
        <fullName evidence="1">Polyribonucleotide nucleotidyltransferase</fullName>
        <ecNumber evidence="1">2.7.7.8</ecNumber>
    </recommendedName>
    <alternativeName>
        <fullName evidence="1">Polynucleotide phosphorylase</fullName>
        <shortName evidence="1">PNPase</shortName>
    </alternativeName>
</protein>
<reference key="1">
    <citation type="submission" date="2006-06" db="EMBL/GenBank/DDBJ databases">
        <title>Complete sequence of chromosome of Mycobacterium sp. MCS.</title>
        <authorList>
            <consortium name="US DOE Joint Genome Institute"/>
            <person name="Copeland A."/>
            <person name="Lucas S."/>
            <person name="Lapidus A."/>
            <person name="Barry K."/>
            <person name="Detter J.C."/>
            <person name="Glavina del Rio T."/>
            <person name="Hammon N."/>
            <person name="Israni S."/>
            <person name="Dalin E."/>
            <person name="Tice H."/>
            <person name="Pitluck S."/>
            <person name="Martinez M."/>
            <person name="Schmutz J."/>
            <person name="Larimer F."/>
            <person name="Land M."/>
            <person name="Hauser L."/>
            <person name="Kyrpides N."/>
            <person name="Kim E."/>
            <person name="Miller C.D."/>
            <person name="Hughes J.E."/>
            <person name="Anderson A.J."/>
            <person name="Sims R.C."/>
            <person name="Richardson P."/>
        </authorList>
    </citation>
    <scope>NUCLEOTIDE SEQUENCE [LARGE SCALE GENOMIC DNA]</scope>
    <source>
        <strain>MCS</strain>
    </source>
</reference>
<sequence>MSVVEIEDGVYESTAVIDNGSFGTRTIRFETGRLAQQAAGAVVAYLDDETMLLSATSASKSPKDHFDFFPLTIDVEERMYAAGRIPGSFFRREGRPSTDAILTCRLIDRPLRPTFVSGLRNEIQVVVTVMSLDPKDLYDVVAINAASASTQIAGLPFSGPVGGVRVALIDGTWVAFPTVEQLERAVFDMVVAGRKTADDVAIMMVEAEATDKVVELVAGGAQAPTEAVVAEGLEAAKPFIKVLCEAQQELAGRAAKPTADYPLFPEYGEDVYYAVASVATDALSEALTIAGKEERNNRTDEIKVEVLGRLADQFAGREKEIGGAFRSLTKKLVRQRILTDHFRIDGRGVTDIRALSAEVAIVPRAHGSALFERGETQILGVTTLDMVKMAQQIDSLGPETSKRYMHHYNFPPYSTGETGRVGSPKRREIGHGALAERALMPVLPSVEEFPYAIRQVSEALSSNGSTSMGSVCASTLSLLNAGVPLKAPVAGIAMGLVSDDVEVDGKTERRFVTLTDILGAEDAFGDMDFKCAGTKDFVTALQLDTKLDGIPSQVLAGALAQAKDARITILEVMAEAIDAPDEMSPYAPRITTIKVPVDKIGEVIGPKGKMINSITEETGASISIEDDGTVFVGASNGEAAQAAIDKINAIANPQLPKIGERFLGTVVKTTDFGAFVSLLPGRDGLVHISKLGRGKRIAKVEDVAKVGDKLRVEIADIDNRGKISLVLVAEEEAAEASDNGSATPSDKAPATADATTAGN</sequence>